<gene>
    <name type="primary">speA1</name>
    <name type="synonym">speA</name>
    <name type="ordered locus">slr0662</name>
</gene>
<feature type="chain" id="PRO_0000149981" description="Biosynthetic arginine decarboxylase 1">
    <location>
        <begin position="1"/>
        <end position="695"/>
    </location>
</feature>
<feature type="binding site" evidence="2">
    <location>
        <begin position="332"/>
        <end position="342"/>
    </location>
    <ligand>
        <name>substrate</name>
    </ligand>
</feature>
<feature type="modified residue" description="N6-(pyridoxal phosphate)lysine" evidence="1">
    <location>
        <position position="141"/>
    </location>
</feature>
<keyword id="KW-0210">Decarboxylase</keyword>
<keyword id="KW-0456">Lyase</keyword>
<keyword id="KW-0460">Magnesium</keyword>
<keyword id="KW-0479">Metal-binding</keyword>
<keyword id="KW-0620">Polyamine biosynthesis</keyword>
<keyword id="KW-0663">Pyridoxal phosphate</keyword>
<keyword id="KW-1185">Reference proteome</keyword>
<keyword id="KW-0745">Spermidine biosynthesis</keyword>
<reference key="1">
    <citation type="journal article" date="1996" name="DNA Res.">
        <title>Sequence analysis of the genome of the unicellular cyanobacterium Synechocystis sp. strain PCC6803. II. Sequence determination of the entire genome and assignment of potential protein-coding regions.</title>
        <authorList>
            <person name="Kaneko T."/>
            <person name="Sato S."/>
            <person name="Kotani H."/>
            <person name="Tanaka A."/>
            <person name="Asamizu E."/>
            <person name="Nakamura Y."/>
            <person name="Miyajima N."/>
            <person name="Hirosawa M."/>
            <person name="Sugiura M."/>
            <person name="Sasamoto S."/>
            <person name="Kimura T."/>
            <person name="Hosouchi T."/>
            <person name="Matsuno A."/>
            <person name="Muraki A."/>
            <person name="Nakazaki N."/>
            <person name="Naruo K."/>
            <person name="Okumura S."/>
            <person name="Shimpo S."/>
            <person name="Takeuchi C."/>
            <person name="Wada T."/>
            <person name="Watanabe A."/>
            <person name="Yamada M."/>
            <person name="Yasuda M."/>
            <person name="Tabata S."/>
        </authorList>
    </citation>
    <scope>NUCLEOTIDE SEQUENCE [LARGE SCALE GENOMIC DNA]</scope>
    <source>
        <strain>ATCC 27184 / PCC 6803 / Kazusa</strain>
    </source>
</reference>
<proteinExistence type="inferred from homology"/>
<organism>
    <name type="scientific">Synechocystis sp. (strain ATCC 27184 / PCC 6803 / Kazusa)</name>
    <dbReference type="NCBI Taxonomy" id="1111708"/>
    <lineage>
        <taxon>Bacteria</taxon>
        <taxon>Bacillati</taxon>
        <taxon>Cyanobacteriota</taxon>
        <taxon>Cyanophyceae</taxon>
        <taxon>Synechococcales</taxon>
        <taxon>Merismopediaceae</taxon>
        <taxon>Synechocystis</taxon>
    </lineage>
</organism>
<evidence type="ECO:0000250" key="1"/>
<evidence type="ECO:0000255" key="2"/>
<evidence type="ECO:0000305" key="3"/>
<dbReference type="EC" id="4.1.1.19"/>
<dbReference type="EMBL" id="BA000022">
    <property type="protein sequence ID" value="BAA18683.1"/>
    <property type="molecule type" value="Genomic_DNA"/>
</dbReference>
<dbReference type="PIR" id="S76771">
    <property type="entry name" value="S76771"/>
</dbReference>
<dbReference type="SMR" id="P74576"/>
<dbReference type="IntAct" id="P74576">
    <property type="interactions" value="2"/>
</dbReference>
<dbReference type="STRING" id="1148.gene:10500454"/>
<dbReference type="PaxDb" id="1148-1653772"/>
<dbReference type="EnsemblBacteria" id="BAA18683">
    <property type="protein sequence ID" value="BAA18683"/>
    <property type="gene ID" value="BAA18683"/>
</dbReference>
<dbReference type="KEGG" id="syn:slr0662"/>
<dbReference type="eggNOG" id="COG1166">
    <property type="taxonomic scope" value="Bacteria"/>
</dbReference>
<dbReference type="InParanoid" id="P74576"/>
<dbReference type="PhylomeDB" id="P74576"/>
<dbReference type="BRENDA" id="4.1.1.19">
    <property type="organism ID" value="382"/>
</dbReference>
<dbReference type="Proteomes" id="UP000001425">
    <property type="component" value="Chromosome"/>
</dbReference>
<dbReference type="GO" id="GO:0008792">
    <property type="term" value="F:arginine decarboxylase activity"/>
    <property type="evidence" value="ECO:0007669"/>
    <property type="project" value="UniProtKB-UniRule"/>
</dbReference>
<dbReference type="GO" id="GO:0046872">
    <property type="term" value="F:metal ion binding"/>
    <property type="evidence" value="ECO:0007669"/>
    <property type="project" value="UniProtKB-KW"/>
</dbReference>
<dbReference type="GO" id="GO:0006527">
    <property type="term" value="P:arginine catabolic process"/>
    <property type="evidence" value="ECO:0007669"/>
    <property type="project" value="InterPro"/>
</dbReference>
<dbReference type="GO" id="GO:0008295">
    <property type="term" value="P:spermidine biosynthetic process"/>
    <property type="evidence" value="ECO:0007669"/>
    <property type="project" value="UniProtKB-UniRule"/>
</dbReference>
<dbReference type="CDD" id="cd06830">
    <property type="entry name" value="PLPDE_III_ADC"/>
    <property type="match status" value="1"/>
</dbReference>
<dbReference type="FunFam" id="1.20.58.930:FF:000002">
    <property type="entry name" value="Biosynthetic arginine decarboxylase"/>
    <property type="match status" value="1"/>
</dbReference>
<dbReference type="FunFam" id="3.20.20.10:FF:000001">
    <property type="entry name" value="Biosynthetic arginine decarboxylase"/>
    <property type="match status" value="1"/>
</dbReference>
<dbReference type="Gene3D" id="1.10.287.3440">
    <property type="match status" value="1"/>
</dbReference>
<dbReference type="Gene3D" id="1.20.58.930">
    <property type="match status" value="1"/>
</dbReference>
<dbReference type="Gene3D" id="3.20.20.10">
    <property type="entry name" value="Alanine racemase"/>
    <property type="match status" value="1"/>
</dbReference>
<dbReference type="Gene3D" id="2.40.37.10">
    <property type="entry name" value="Lyase, Ornithine Decarboxylase, Chain A, domain 1"/>
    <property type="match status" value="1"/>
</dbReference>
<dbReference type="HAMAP" id="MF_01417">
    <property type="entry name" value="SpeA"/>
    <property type="match status" value="1"/>
</dbReference>
<dbReference type="InterPro" id="IPR009006">
    <property type="entry name" value="Ala_racemase/Decarboxylase_C"/>
</dbReference>
<dbReference type="InterPro" id="IPR040634">
    <property type="entry name" value="Arg_decarb_HB"/>
</dbReference>
<dbReference type="InterPro" id="IPR041128">
    <property type="entry name" value="Arg_decarbox_C"/>
</dbReference>
<dbReference type="InterPro" id="IPR002985">
    <property type="entry name" value="Arg_decrbxlase"/>
</dbReference>
<dbReference type="InterPro" id="IPR022657">
    <property type="entry name" value="De-COase2_CS"/>
</dbReference>
<dbReference type="InterPro" id="IPR022644">
    <property type="entry name" value="De-COase2_N"/>
</dbReference>
<dbReference type="InterPro" id="IPR022653">
    <property type="entry name" value="De-COase2_pyr-phos_BS"/>
</dbReference>
<dbReference type="InterPro" id="IPR000183">
    <property type="entry name" value="Orn/DAP/Arg_de-COase"/>
</dbReference>
<dbReference type="InterPro" id="IPR029066">
    <property type="entry name" value="PLP-binding_barrel"/>
</dbReference>
<dbReference type="NCBIfam" id="NF003763">
    <property type="entry name" value="PRK05354.1"/>
    <property type="match status" value="1"/>
</dbReference>
<dbReference type="NCBIfam" id="TIGR01273">
    <property type="entry name" value="speA"/>
    <property type="match status" value="1"/>
</dbReference>
<dbReference type="PANTHER" id="PTHR43295">
    <property type="entry name" value="ARGININE DECARBOXYLASE"/>
    <property type="match status" value="1"/>
</dbReference>
<dbReference type="PANTHER" id="PTHR43295:SF9">
    <property type="entry name" value="BIOSYNTHETIC ARGININE DECARBOXYLASE"/>
    <property type="match status" value="1"/>
</dbReference>
<dbReference type="Pfam" id="PF17810">
    <property type="entry name" value="Arg_decarb_HB"/>
    <property type="match status" value="1"/>
</dbReference>
<dbReference type="Pfam" id="PF17944">
    <property type="entry name" value="Arg_decarbox_C"/>
    <property type="match status" value="1"/>
</dbReference>
<dbReference type="Pfam" id="PF02784">
    <property type="entry name" value="Orn_Arg_deC_N"/>
    <property type="match status" value="1"/>
</dbReference>
<dbReference type="PIRSF" id="PIRSF001336">
    <property type="entry name" value="Arg_decrbxlase"/>
    <property type="match status" value="1"/>
</dbReference>
<dbReference type="PRINTS" id="PR01180">
    <property type="entry name" value="ARGDCRBXLASE"/>
</dbReference>
<dbReference type="PRINTS" id="PR01179">
    <property type="entry name" value="ODADCRBXLASE"/>
</dbReference>
<dbReference type="SUPFAM" id="SSF50621">
    <property type="entry name" value="Alanine racemase C-terminal domain-like"/>
    <property type="match status" value="1"/>
</dbReference>
<dbReference type="SUPFAM" id="SSF51419">
    <property type="entry name" value="PLP-binding barrel"/>
    <property type="match status" value="1"/>
</dbReference>
<dbReference type="PROSITE" id="PS00878">
    <property type="entry name" value="ODR_DC_2_1"/>
    <property type="match status" value="1"/>
</dbReference>
<dbReference type="PROSITE" id="PS00879">
    <property type="entry name" value="ODR_DC_2_2"/>
    <property type="match status" value="1"/>
</dbReference>
<name>SPEA1_SYNY3</name>
<sequence>MEGQSIELELSVMAMPELIDSTEAGHTAGVKTDSNPQAIAQDRRWTIDDSENLYRITGWGEPYFSINAAGHVTVSPQADHGGALDLYELVKGLRQRNIGLPLLLRFSDILADRINRLNAAFARGIARYRYPNTYRGVYPIKCNQHRHIVESLVRYGTPYNFGLEAGSKPELMIALAMLQPQENPEPDQQNQPLLICNGYKDREYIETALLARRLGHRPIIVVEQVAEVALAIEISSNLGIKPILGVRAKLSTQGMGRWGISTGDRAKFGLTIPEMLTAIEQLRRADMLDSLQLLHFHIGSQISSISVIKEAMTEASQIFVQLAKLGANMRYLDVGGGLGVDYDGSKTNFYASKNYNIQNYVNDVISAVQDACVAAEVPCPVLISESGRAIASHQSVLIFDVVATNDINPPLPKVKGKDHAILRNLMETWETITVDNYQEAYHDVEQFKTEAISLFNFGYLGLKERAKAEELYWACCRKILQICRQQEYVPDDLENLEVNLASIYYANMSVFQSAPDSWAIDQLFPIMPIHRLDEEPTQRGILADITCDSDGKIDQFIDLRDVKSVLELHPLIEVHQPGTPPRVEPYYLGMFLVGAYQEIMGNLHNLFGDINVVHIQMNPKGYQIEHLVRGDTIAEVLGYVQYDPEDLLENMRRYCEQAMEDKRMSLEEAQLLLENYERSLLQYTYLKPTSGIHTS</sequence>
<protein>
    <recommendedName>
        <fullName>Biosynthetic arginine decarboxylase 1</fullName>
        <shortName>ADC 1</shortName>
        <ecNumber>4.1.1.19</ecNumber>
    </recommendedName>
</protein>
<accession>P74576</accession>
<comment type="function">
    <text evidence="1">Catalyzes the biosynthesis of agmatine from arginine.</text>
</comment>
<comment type="catalytic activity">
    <reaction>
        <text>L-arginine + H(+) = agmatine + CO2</text>
        <dbReference type="Rhea" id="RHEA:17641"/>
        <dbReference type="ChEBI" id="CHEBI:15378"/>
        <dbReference type="ChEBI" id="CHEBI:16526"/>
        <dbReference type="ChEBI" id="CHEBI:32682"/>
        <dbReference type="ChEBI" id="CHEBI:58145"/>
        <dbReference type="EC" id="4.1.1.19"/>
    </reaction>
</comment>
<comment type="cofactor">
    <cofactor evidence="1">
        <name>Mg(2+)</name>
        <dbReference type="ChEBI" id="CHEBI:18420"/>
    </cofactor>
</comment>
<comment type="cofactor">
    <cofactor evidence="1">
        <name>pyridoxal 5'-phosphate</name>
        <dbReference type="ChEBI" id="CHEBI:597326"/>
    </cofactor>
</comment>
<comment type="similarity">
    <text evidence="3">Belongs to the Orn/Lys/Arg decarboxylase class-II family. SpeA subfamily.</text>
</comment>